<evidence type="ECO:0000255" key="1">
    <source>
        <dbReference type="HAMAP-Rule" id="MF_00321"/>
    </source>
</evidence>
<gene>
    <name evidence="1" type="primary">engB</name>
    <name type="ordered locus">SaurJH9_1731</name>
</gene>
<protein>
    <recommendedName>
        <fullName evidence="1">Probable GTP-binding protein EngB</fullName>
    </recommendedName>
</protein>
<proteinExistence type="inferred from homology"/>
<name>ENGB_STAA9</name>
<organism>
    <name type="scientific">Staphylococcus aureus (strain JH9)</name>
    <dbReference type="NCBI Taxonomy" id="359786"/>
    <lineage>
        <taxon>Bacteria</taxon>
        <taxon>Bacillati</taxon>
        <taxon>Bacillota</taxon>
        <taxon>Bacilli</taxon>
        <taxon>Bacillales</taxon>
        <taxon>Staphylococcaceae</taxon>
        <taxon>Staphylococcus</taxon>
    </lineage>
</organism>
<comment type="function">
    <text evidence="1">Necessary for normal cell division and for the maintenance of normal septation.</text>
</comment>
<comment type="cofactor">
    <cofactor evidence="1">
        <name>Mg(2+)</name>
        <dbReference type="ChEBI" id="CHEBI:18420"/>
    </cofactor>
</comment>
<comment type="similarity">
    <text evidence="1">Belongs to the TRAFAC class TrmE-Era-EngA-EngB-Septin-like GTPase superfamily. EngB GTPase family.</text>
</comment>
<sequence length="196" mass="22685">MKVNPNNIELIISAVKEEQYPETELSEVALSGRSNVGKSTFINSMIGRKNMARTSQQPGKTQTLNFYNIDEQLIFVDVPGYGYAKVSKTQREKFGKMIEEYITKRENLQLVIQLVDLRHDPTQDDILMYNYLKHFDIPTLVICTKEDKIPKGKVQKHIKNIKTQLDMDPDDTIVSYSSIQNNKQQQIWNLIEPYIS</sequence>
<feature type="chain" id="PRO_1000079186" description="Probable GTP-binding protein EngB">
    <location>
        <begin position="1"/>
        <end position="196"/>
    </location>
</feature>
<feature type="domain" description="EngB-type G" evidence="1">
    <location>
        <begin position="24"/>
        <end position="196"/>
    </location>
</feature>
<feature type="binding site" evidence="1">
    <location>
        <begin position="32"/>
        <end position="39"/>
    </location>
    <ligand>
        <name>GTP</name>
        <dbReference type="ChEBI" id="CHEBI:37565"/>
    </ligand>
</feature>
<feature type="binding site" evidence="1">
    <location>
        <position position="39"/>
    </location>
    <ligand>
        <name>Mg(2+)</name>
        <dbReference type="ChEBI" id="CHEBI:18420"/>
    </ligand>
</feature>
<feature type="binding site" evidence="1">
    <location>
        <begin position="59"/>
        <end position="63"/>
    </location>
    <ligand>
        <name>GTP</name>
        <dbReference type="ChEBI" id="CHEBI:37565"/>
    </ligand>
</feature>
<feature type="binding site" evidence="1">
    <location>
        <position position="61"/>
    </location>
    <ligand>
        <name>Mg(2+)</name>
        <dbReference type="ChEBI" id="CHEBI:18420"/>
    </ligand>
</feature>
<feature type="binding site" evidence="1">
    <location>
        <begin position="77"/>
        <end position="80"/>
    </location>
    <ligand>
        <name>GTP</name>
        <dbReference type="ChEBI" id="CHEBI:37565"/>
    </ligand>
</feature>
<feature type="binding site" evidence="1">
    <location>
        <begin position="144"/>
        <end position="147"/>
    </location>
    <ligand>
        <name>GTP</name>
        <dbReference type="ChEBI" id="CHEBI:37565"/>
    </ligand>
</feature>
<feature type="binding site" evidence="1">
    <location>
        <begin position="176"/>
        <end position="178"/>
    </location>
    <ligand>
        <name>GTP</name>
        <dbReference type="ChEBI" id="CHEBI:37565"/>
    </ligand>
</feature>
<keyword id="KW-0131">Cell cycle</keyword>
<keyword id="KW-0132">Cell division</keyword>
<keyword id="KW-0342">GTP-binding</keyword>
<keyword id="KW-0460">Magnesium</keyword>
<keyword id="KW-0479">Metal-binding</keyword>
<keyword id="KW-0547">Nucleotide-binding</keyword>
<keyword id="KW-0717">Septation</keyword>
<reference key="1">
    <citation type="submission" date="2007-05" db="EMBL/GenBank/DDBJ databases">
        <title>Complete sequence of chromosome of Staphylococcus aureus subsp. aureus JH9.</title>
        <authorList>
            <consortium name="US DOE Joint Genome Institute"/>
            <person name="Copeland A."/>
            <person name="Lucas S."/>
            <person name="Lapidus A."/>
            <person name="Barry K."/>
            <person name="Detter J.C."/>
            <person name="Glavina del Rio T."/>
            <person name="Hammon N."/>
            <person name="Israni S."/>
            <person name="Pitluck S."/>
            <person name="Chain P."/>
            <person name="Malfatti S."/>
            <person name="Shin M."/>
            <person name="Vergez L."/>
            <person name="Schmutz J."/>
            <person name="Larimer F."/>
            <person name="Land M."/>
            <person name="Hauser L."/>
            <person name="Kyrpides N."/>
            <person name="Kim E."/>
            <person name="Tomasz A."/>
            <person name="Richardson P."/>
        </authorList>
    </citation>
    <scope>NUCLEOTIDE SEQUENCE [LARGE SCALE GENOMIC DNA]</scope>
    <source>
        <strain>JH9</strain>
    </source>
</reference>
<dbReference type="EMBL" id="CP000703">
    <property type="protein sequence ID" value="ABQ49521.1"/>
    <property type="molecule type" value="Genomic_DNA"/>
</dbReference>
<dbReference type="SMR" id="A5ITJ8"/>
<dbReference type="KEGG" id="saj:SaurJH9_1731"/>
<dbReference type="HOGENOM" id="CLU_033732_3_0_9"/>
<dbReference type="GO" id="GO:0005829">
    <property type="term" value="C:cytosol"/>
    <property type="evidence" value="ECO:0007669"/>
    <property type="project" value="TreeGrafter"/>
</dbReference>
<dbReference type="GO" id="GO:0005525">
    <property type="term" value="F:GTP binding"/>
    <property type="evidence" value="ECO:0007669"/>
    <property type="project" value="UniProtKB-UniRule"/>
</dbReference>
<dbReference type="GO" id="GO:0046872">
    <property type="term" value="F:metal ion binding"/>
    <property type="evidence" value="ECO:0007669"/>
    <property type="project" value="UniProtKB-KW"/>
</dbReference>
<dbReference type="GO" id="GO:0000917">
    <property type="term" value="P:division septum assembly"/>
    <property type="evidence" value="ECO:0007669"/>
    <property type="project" value="UniProtKB-KW"/>
</dbReference>
<dbReference type="CDD" id="cd01876">
    <property type="entry name" value="YihA_EngB"/>
    <property type="match status" value="1"/>
</dbReference>
<dbReference type="FunFam" id="3.40.50.300:FF:000098">
    <property type="entry name" value="Probable GTP-binding protein EngB"/>
    <property type="match status" value="1"/>
</dbReference>
<dbReference type="Gene3D" id="3.40.50.300">
    <property type="entry name" value="P-loop containing nucleotide triphosphate hydrolases"/>
    <property type="match status" value="1"/>
</dbReference>
<dbReference type="HAMAP" id="MF_00321">
    <property type="entry name" value="GTPase_EngB"/>
    <property type="match status" value="1"/>
</dbReference>
<dbReference type="InterPro" id="IPR030393">
    <property type="entry name" value="G_ENGB_dom"/>
</dbReference>
<dbReference type="InterPro" id="IPR006073">
    <property type="entry name" value="GTP-bd"/>
</dbReference>
<dbReference type="InterPro" id="IPR019987">
    <property type="entry name" value="GTP-bd_ribosome_bio_YsxC"/>
</dbReference>
<dbReference type="InterPro" id="IPR027417">
    <property type="entry name" value="P-loop_NTPase"/>
</dbReference>
<dbReference type="NCBIfam" id="TIGR03598">
    <property type="entry name" value="GTPase_YsxC"/>
    <property type="match status" value="1"/>
</dbReference>
<dbReference type="PANTHER" id="PTHR11649:SF13">
    <property type="entry name" value="ENGB-TYPE G DOMAIN-CONTAINING PROTEIN"/>
    <property type="match status" value="1"/>
</dbReference>
<dbReference type="PANTHER" id="PTHR11649">
    <property type="entry name" value="MSS1/TRME-RELATED GTP-BINDING PROTEIN"/>
    <property type="match status" value="1"/>
</dbReference>
<dbReference type="Pfam" id="PF01926">
    <property type="entry name" value="MMR_HSR1"/>
    <property type="match status" value="1"/>
</dbReference>
<dbReference type="SUPFAM" id="SSF52540">
    <property type="entry name" value="P-loop containing nucleoside triphosphate hydrolases"/>
    <property type="match status" value="1"/>
</dbReference>
<dbReference type="PROSITE" id="PS51706">
    <property type="entry name" value="G_ENGB"/>
    <property type="match status" value="1"/>
</dbReference>
<accession>A5ITJ8</accession>